<accession>Q75EV6</accession>
<sequence length="1044" mass="115848">MSDSAQSIKVLGELFEKLSVATAENREATATEIASFLNGNIIEHDVPEEFFKNLTKAVKDKKTAAAALETIAHIANENNLSPSVEPYIVDLVPEVCVKTGDKDKDVQSIASETLLAIVKAIDPVAIKVILPHLTKSLVTTNKWQEKVSVLAAISALVDAAKTQVALRMPELIPVLSEAMWDTKKEVKHAATATMTKATETVDNKDIERFIPELIQCIADPSQVSETVHLLGATTFVAEVTPATLSIMVPLLNRGLAERETSIKRKAAVIIDNMCKLVEDPQVVAPFLEKLLPGLKNNFATIADPEAREVTLRGLKTLRRVGNVSDDDTLPEVSHAGDIVTTRGVLDELTKDTPIAPRFAPVVNYIAAIAADLIDERIIDQQAWFTHVTPYMTVFFHEKQSKEIIDDFRKRAVDNIPVGPNFDDEEDEGEDLCNCEFSLAYGAKILLNKTQLRLKRARRYGLCGPNGAGKSTLMRAIANGQVDGFPTQDECRTVYVEHDIDGTQADTSVLDFVFQGDVGTREVITEKLREFGFSDEMIAMPIMSLSGGWKMKLALARAVLKNADILLLDEPTNHLDTVNVAWLVNYLNTCGITSIIVSHDSGFLDNVCQYIIHYEGLKLRKYKGNLSEFVKKCPTAKSYYELGASDLEFKFPEPGFLEGVKTKQKAIVKVSNMSFQYPGTSKPQIADINFQCSLSSRIAVIGPNGAGKSTLINVLTGELLPTTGEVYTHENCRIAYIKQHAFAHIENHLDKTPSEYIQWRFQTGEDRETMDRANRQINESDAESMNKIFKIDGTPRRIAGIHSRRKFKNTYEYECSFLLGENIGMKSERWVPMMSVDNAWLPRGELIESHSKMVAEVDMKEALASGQFRPLTRKEIEEHCAMLGLEAELVSHSRIRGLSGGQKVKLVLAACTWQRPHLIVLDEPTNYLDRDSLGALSKALKAFEGGVIIITHSAEFTKDLTEEVWAVKDGIMTPSGHNWVSGQGSGPRLEKKEDEGDKFDAMGNKIATGNKKKKLSSAELRKKKKERMKKKKELGDAYVSSDDEF</sequence>
<proteinExistence type="inferred from homology"/>
<gene>
    <name type="primary">TEF3</name>
    <name type="ordered locus">AAL028W</name>
</gene>
<comment type="function">
    <text evidence="1">Ribosome-dependent ATPase that functions in cytoplasmic translation elongation (By similarity). Required for the ATP-dependent release of deacylated tRNA from the ribosomal E-site during protein biosynthesis (By similarity). Stimulates the eEF1A-dependent binding of aminoacyl-tRNA to the ribosomal A-site, which has reduced affinity for tRNA as long as the E-site is occupied (By similarity). Assists translation termination by stimulating the release of nascent protein from the ribosome by release factors (By similarity).</text>
</comment>
<comment type="catalytic activity">
    <reaction evidence="1">
        <text>ATP + H2O = ADP + phosphate + H(+)</text>
        <dbReference type="Rhea" id="RHEA:13065"/>
        <dbReference type="ChEBI" id="CHEBI:15377"/>
        <dbReference type="ChEBI" id="CHEBI:15378"/>
        <dbReference type="ChEBI" id="CHEBI:30616"/>
        <dbReference type="ChEBI" id="CHEBI:43474"/>
        <dbReference type="ChEBI" id="CHEBI:456216"/>
    </reaction>
</comment>
<comment type="pathway">
    <text evidence="4">Protein biosynthesis; polypeptide chain elongation.</text>
</comment>
<comment type="subunit">
    <text evidence="1">Monomer.</text>
</comment>
<comment type="subcellular location">
    <subcellularLocation>
        <location evidence="1">Cytoplasm</location>
    </subcellularLocation>
</comment>
<comment type="similarity">
    <text evidence="4">Belongs to the ABC transporter superfamily. ABCF family. EF3 subfamily.</text>
</comment>
<dbReference type="EC" id="3.6.4.-" evidence="1"/>
<dbReference type="EMBL" id="AE016814">
    <property type="protein sequence ID" value="AAS50338.2"/>
    <property type="molecule type" value="Genomic_DNA"/>
</dbReference>
<dbReference type="RefSeq" id="NP_982514.2">
    <property type="nucleotide sequence ID" value="NM_207867.2"/>
</dbReference>
<dbReference type="SMR" id="Q75EV6"/>
<dbReference type="FunCoup" id="Q75EV6">
    <property type="interactions" value="711"/>
</dbReference>
<dbReference type="STRING" id="284811.Q75EV6"/>
<dbReference type="EnsemblFungi" id="AAS50338">
    <property type="protein sequence ID" value="AAS50338"/>
    <property type="gene ID" value="AGOS_AAL028W"/>
</dbReference>
<dbReference type="GeneID" id="4618454"/>
<dbReference type="KEGG" id="ago:AGOS_AAL028W"/>
<dbReference type="eggNOG" id="KOG0062">
    <property type="taxonomic scope" value="Eukaryota"/>
</dbReference>
<dbReference type="eggNOG" id="KOG1242">
    <property type="taxonomic scope" value="Eukaryota"/>
</dbReference>
<dbReference type="HOGENOM" id="CLU_002848_0_0_1"/>
<dbReference type="InParanoid" id="Q75EV6"/>
<dbReference type="OMA" id="VLSEAMW"/>
<dbReference type="OrthoDB" id="2110130at2759"/>
<dbReference type="UniPathway" id="UPA00345"/>
<dbReference type="Proteomes" id="UP000000591">
    <property type="component" value="Chromosome I"/>
</dbReference>
<dbReference type="GO" id="GO:0010494">
    <property type="term" value="C:cytoplasmic stress granule"/>
    <property type="evidence" value="ECO:0007669"/>
    <property type="project" value="EnsemblFungi"/>
</dbReference>
<dbReference type="GO" id="GO:0022626">
    <property type="term" value="C:cytosolic ribosome"/>
    <property type="evidence" value="ECO:0007669"/>
    <property type="project" value="EnsemblFungi"/>
</dbReference>
<dbReference type="GO" id="GO:0005524">
    <property type="term" value="F:ATP binding"/>
    <property type="evidence" value="ECO:0000318"/>
    <property type="project" value="GO_Central"/>
</dbReference>
<dbReference type="GO" id="GO:0016887">
    <property type="term" value="F:ATP hydrolysis activity"/>
    <property type="evidence" value="ECO:0000318"/>
    <property type="project" value="GO_Central"/>
</dbReference>
<dbReference type="GO" id="GO:0043022">
    <property type="term" value="F:ribosome binding"/>
    <property type="evidence" value="ECO:0007669"/>
    <property type="project" value="EnsemblFungi"/>
</dbReference>
<dbReference type="GO" id="GO:0003723">
    <property type="term" value="F:RNA binding"/>
    <property type="evidence" value="ECO:0007669"/>
    <property type="project" value="UniProtKB-KW"/>
</dbReference>
<dbReference type="GO" id="GO:0003746">
    <property type="term" value="F:translation elongation factor activity"/>
    <property type="evidence" value="ECO:0000318"/>
    <property type="project" value="GO_Central"/>
</dbReference>
<dbReference type="GO" id="GO:0002182">
    <property type="term" value="P:cytoplasmic translational elongation"/>
    <property type="evidence" value="ECO:0007669"/>
    <property type="project" value="EnsemblFungi"/>
</dbReference>
<dbReference type="GO" id="GO:0002184">
    <property type="term" value="P:cytoplasmic translational termination"/>
    <property type="evidence" value="ECO:0007669"/>
    <property type="project" value="EnsemblFungi"/>
</dbReference>
<dbReference type="CDD" id="cd03221">
    <property type="entry name" value="ABCF_EF-3"/>
    <property type="match status" value="1"/>
</dbReference>
<dbReference type="CDD" id="cd18626">
    <property type="entry name" value="CD_eEF3"/>
    <property type="match status" value="1"/>
</dbReference>
<dbReference type="CDD" id="cd00882">
    <property type="entry name" value="Ras_like_GTPase"/>
    <property type="match status" value="1"/>
</dbReference>
<dbReference type="FunFam" id="1.20.1390.20:FF:000001">
    <property type="entry name" value="Elongation factor 3"/>
    <property type="match status" value="1"/>
</dbReference>
<dbReference type="FunFam" id="1.25.10.10:FF:000076">
    <property type="entry name" value="Elongation factor 3"/>
    <property type="match status" value="1"/>
</dbReference>
<dbReference type="FunFam" id="2.40.50.990:FF:000001">
    <property type="entry name" value="Elongation factor 3"/>
    <property type="match status" value="1"/>
</dbReference>
<dbReference type="FunFam" id="3.40.50.300:FF:000193">
    <property type="entry name" value="Probable Elongation factor 3"/>
    <property type="match status" value="1"/>
</dbReference>
<dbReference type="Gene3D" id="1.20.1390.20">
    <property type="match status" value="1"/>
</dbReference>
<dbReference type="Gene3D" id="2.40.50.990">
    <property type="match status" value="1"/>
</dbReference>
<dbReference type="Gene3D" id="1.25.10.10">
    <property type="entry name" value="Leucine-rich Repeat Variant"/>
    <property type="match status" value="1"/>
</dbReference>
<dbReference type="Gene3D" id="3.40.50.300">
    <property type="entry name" value="P-loop containing nucleotide triphosphate hydrolases"/>
    <property type="match status" value="2"/>
</dbReference>
<dbReference type="InterPro" id="IPR003593">
    <property type="entry name" value="AAA+_ATPase"/>
</dbReference>
<dbReference type="InterPro" id="IPR003439">
    <property type="entry name" value="ABC_transporter-like_ATP-bd"/>
</dbReference>
<dbReference type="InterPro" id="IPR017871">
    <property type="entry name" value="ABC_transporter-like_CS"/>
</dbReference>
<dbReference type="InterPro" id="IPR050611">
    <property type="entry name" value="ABCF_EF3_subfamily"/>
</dbReference>
<dbReference type="InterPro" id="IPR011989">
    <property type="entry name" value="ARM-like"/>
</dbReference>
<dbReference type="InterPro" id="IPR016024">
    <property type="entry name" value="ARM-type_fold"/>
</dbReference>
<dbReference type="InterPro" id="IPR015688">
    <property type="entry name" value="eEF3_ABC2_chromodomain-like"/>
</dbReference>
<dbReference type="InterPro" id="IPR047038">
    <property type="entry name" value="eEF3_chromodomain-like_sf"/>
</dbReference>
<dbReference type="InterPro" id="IPR040533">
    <property type="entry name" value="EF3_4HB"/>
</dbReference>
<dbReference type="InterPro" id="IPR047036">
    <property type="entry name" value="EF3_4HB_sf"/>
</dbReference>
<dbReference type="InterPro" id="IPR021133">
    <property type="entry name" value="HEAT_type_2"/>
</dbReference>
<dbReference type="InterPro" id="IPR027417">
    <property type="entry name" value="P-loop_NTPase"/>
</dbReference>
<dbReference type="PANTHER" id="PTHR19211">
    <property type="entry name" value="ATP-BINDING TRANSPORT PROTEIN-RELATED"/>
    <property type="match status" value="1"/>
</dbReference>
<dbReference type="PANTHER" id="PTHR19211:SF5">
    <property type="entry name" value="ELONGATION FACTOR 3A-RELATED"/>
    <property type="match status" value="1"/>
</dbReference>
<dbReference type="Pfam" id="PF17947">
    <property type="entry name" value="4HB"/>
    <property type="match status" value="1"/>
</dbReference>
<dbReference type="Pfam" id="PF00005">
    <property type="entry name" value="ABC_tran"/>
    <property type="match status" value="3"/>
</dbReference>
<dbReference type="Pfam" id="PF24984">
    <property type="entry name" value="HEAT_EF3_GNC1"/>
    <property type="match status" value="1"/>
</dbReference>
<dbReference type="Pfam" id="PF24987">
    <property type="entry name" value="HEAT_EF3_N"/>
    <property type="match status" value="1"/>
</dbReference>
<dbReference type="SMART" id="SM00382">
    <property type="entry name" value="AAA"/>
    <property type="match status" value="2"/>
</dbReference>
<dbReference type="SUPFAM" id="SSF48371">
    <property type="entry name" value="ARM repeat"/>
    <property type="match status" value="1"/>
</dbReference>
<dbReference type="SUPFAM" id="SSF52540">
    <property type="entry name" value="P-loop containing nucleoside triphosphate hydrolases"/>
    <property type="match status" value="2"/>
</dbReference>
<dbReference type="PROSITE" id="PS00211">
    <property type="entry name" value="ABC_TRANSPORTER_1"/>
    <property type="match status" value="2"/>
</dbReference>
<dbReference type="PROSITE" id="PS50893">
    <property type="entry name" value="ABC_TRANSPORTER_2"/>
    <property type="match status" value="2"/>
</dbReference>
<dbReference type="PROSITE" id="PS50077">
    <property type="entry name" value="HEAT_REPEAT"/>
    <property type="match status" value="1"/>
</dbReference>
<organism>
    <name type="scientific">Eremothecium gossypii (strain ATCC 10895 / CBS 109.51 / FGSC 9923 / NRRL Y-1056)</name>
    <name type="common">Yeast</name>
    <name type="synonym">Ashbya gossypii</name>
    <dbReference type="NCBI Taxonomy" id="284811"/>
    <lineage>
        <taxon>Eukaryota</taxon>
        <taxon>Fungi</taxon>
        <taxon>Dikarya</taxon>
        <taxon>Ascomycota</taxon>
        <taxon>Saccharomycotina</taxon>
        <taxon>Saccharomycetes</taxon>
        <taxon>Saccharomycetales</taxon>
        <taxon>Saccharomycetaceae</taxon>
        <taxon>Eremothecium</taxon>
    </lineage>
</organism>
<protein>
    <recommendedName>
        <fullName evidence="4">Elongation factor 3</fullName>
        <shortName evidence="4">EF-3</shortName>
        <ecNumber evidence="1">3.6.4.-</ecNumber>
    </recommendedName>
    <alternativeName>
        <fullName evidence="4">Eukaryotic elongation factor 3</fullName>
        <shortName evidence="4">eEF3</shortName>
    </alternativeName>
</protein>
<reference key="1">
    <citation type="journal article" date="2004" name="Science">
        <title>The Ashbya gossypii genome as a tool for mapping the ancient Saccharomyces cerevisiae genome.</title>
        <authorList>
            <person name="Dietrich F.S."/>
            <person name="Voegeli S."/>
            <person name="Brachat S."/>
            <person name="Lerch A."/>
            <person name="Gates K."/>
            <person name="Steiner S."/>
            <person name="Mohr C."/>
            <person name="Poehlmann R."/>
            <person name="Luedi P."/>
            <person name="Choi S."/>
            <person name="Wing R.A."/>
            <person name="Flavier A."/>
            <person name="Gaffney T.D."/>
            <person name="Philippsen P."/>
        </authorList>
    </citation>
    <scope>NUCLEOTIDE SEQUENCE [LARGE SCALE GENOMIC DNA]</scope>
    <source>
        <strain>ATCC 10895 / CBS 109.51 / FGSC 9923 / NRRL Y-1056</strain>
    </source>
</reference>
<reference key="2">
    <citation type="journal article" date="2013" name="G3 (Bethesda)">
        <title>Genomes of Ashbya fungi isolated from insects reveal four mating-type loci, numerous translocations, lack of transposons, and distinct gene duplications.</title>
        <authorList>
            <person name="Dietrich F.S."/>
            <person name="Voegeli S."/>
            <person name="Kuo S."/>
            <person name="Philippsen P."/>
        </authorList>
    </citation>
    <scope>GENOME REANNOTATION</scope>
    <scope>SEQUENCE REVISION TO 400; 422; 424; 427 AND 454</scope>
    <source>
        <strain>ATCC 10895 / CBS 109.51 / FGSC 9923 / NRRL Y-1056</strain>
    </source>
</reference>
<evidence type="ECO:0000250" key="1">
    <source>
        <dbReference type="UniProtKB" id="P16521"/>
    </source>
</evidence>
<evidence type="ECO:0000255" key="2">
    <source>
        <dbReference type="PROSITE-ProRule" id="PRU00434"/>
    </source>
</evidence>
<evidence type="ECO:0000256" key="3">
    <source>
        <dbReference type="SAM" id="MobiDB-lite"/>
    </source>
</evidence>
<evidence type="ECO:0000305" key="4"/>
<keyword id="KW-0067">ATP-binding</keyword>
<keyword id="KW-0963">Cytoplasm</keyword>
<keyword id="KW-0251">Elongation factor</keyword>
<keyword id="KW-0378">Hydrolase</keyword>
<keyword id="KW-0547">Nucleotide-binding</keyword>
<keyword id="KW-0648">Protein biosynthesis</keyword>
<keyword id="KW-1185">Reference proteome</keyword>
<keyword id="KW-0677">Repeat</keyword>
<keyword id="KW-0694">RNA-binding</keyword>
<feature type="chain" id="PRO_0000093453" description="Elongation factor 3">
    <location>
        <begin position="1"/>
        <end position="1044"/>
    </location>
</feature>
<feature type="repeat" description="HEAT 1">
    <location>
        <begin position="5"/>
        <end position="42"/>
    </location>
</feature>
<feature type="repeat" description="HEAT 2">
    <location>
        <begin position="45"/>
        <end position="80"/>
    </location>
</feature>
<feature type="repeat" description="HEAT 3">
    <location>
        <begin position="86"/>
        <end position="123"/>
    </location>
</feature>
<feature type="repeat" description="HEAT 4">
    <location>
        <begin position="124"/>
        <end position="162"/>
    </location>
</feature>
<feature type="repeat" description="HEAT 5">
    <location>
        <begin position="166"/>
        <end position="203"/>
    </location>
</feature>
<feature type="repeat" description="HEAT 6">
    <location>
        <begin position="205"/>
        <end position="241"/>
    </location>
</feature>
<feature type="repeat" description="HEAT 7">
    <location>
        <begin position="242"/>
        <end position="279"/>
    </location>
</feature>
<feature type="repeat" description="HEAT 8">
    <location>
        <begin position="285"/>
        <end position="323"/>
    </location>
</feature>
<feature type="domain" description="ABC transporter 1" evidence="2">
    <location>
        <begin position="426"/>
        <end position="641"/>
    </location>
</feature>
<feature type="domain" description="ABC transporter 2" evidence="2">
    <location>
        <begin position="667"/>
        <end position="993"/>
    </location>
</feature>
<feature type="region of interest" description="Disordered" evidence="3">
    <location>
        <begin position="975"/>
        <end position="1044"/>
    </location>
</feature>
<feature type="compositionally biased region" description="Basic and acidic residues" evidence="3">
    <location>
        <begin position="987"/>
        <end position="999"/>
    </location>
</feature>
<feature type="compositionally biased region" description="Basic residues" evidence="3">
    <location>
        <begin position="1009"/>
        <end position="1031"/>
    </location>
</feature>
<feature type="binding site" evidence="1">
    <location>
        <position position="42"/>
    </location>
    <ligand>
        <name>ADP</name>
        <dbReference type="ChEBI" id="CHEBI:456216"/>
    </ligand>
</feature>
<feature type="binding site" evidence="1">
    <location>
        <position position="44"/>
    </location>
    <ligand>
        <name>ADP</name>
        <dbReference type="ChEBI" id="CHEBI:456216"/>
    </ligand>
</feature>
<feature type="binding site" evidence="1">
    <location>
        <position position="83"/>
    </location>
    <ligand>
        <name>ADP</name>
        <dbReference type="ChEBI" id="CHEBI:456216"/>
    </ligand>
</feature>
<feature type="binding site" evidence="1">
    <location>
        <position position="392"/>
    </location>
    <ligand>
        <name>ADP</name>
        <dbReference type="ChEBI" id="CHEBI:456216"/>
    </ligand>
</feature>
<feature type="binding site" evidence="1">
    <location>
        <position position="396"/>
    </location>
    <ligand>
        <name>ADP</name>
        <dbReference type="ChEBI" id="CHEBI:456216"/>
    </ligand>
</feature>
<feature type="binding site" evidence="1">
    <location>
        <position position="397"/>
    </location>
    <ligand>
        <name>ADP</name>
        <dbReference type="ChEBI" id="CHEBI:456216"/>
    </ligand>
</feature>
<feature type="binding site" evidence="1">
    <location>
        <position position="703"/>
    </location>
    <ligand>
        <name>ADP</name>
        <dbReference type="ChEBI" id="CHEBI:456216"/>
    </ligand>
</feature>
<feature type="binding site" evidence="1">
    <location>
        <position position="922"/>
    </location>
    <ligand>
        <name>ADP</name>
        <dbReference type="ChEBI" id="CHEBI:456216"/>
    </ligand>
</feature>
<feature type="binding site" evidence="1">
    <location>
        <position position="925"/>
    </location>
    <ligand>
        <name>ADP</name>
        <dbReference type="ChEBI" id="CHEBI:456216"/>
    </ligand>
</feature>
<feature type="binding site" evidence="1">
    <location>
        <position position="951"/>
    </location>
    <ligand>
        <name>ADP</name>
        <dbReference type="ChEBI" id="CHEBI:456216"/>
    </ligand>
</feature>
<name>EF3_EREGS</name>